<accession>Q885X7</accession>
<reference key="1">
    <citation type="journal article" date="2003" name="Proc. Natl. Acad. Sci. U.S.A.">
        <title>The complete genome sequence of the Arabidopsis and tomato pathogen Pseudomonas syringae pv. tomato DC3000.</title>
        <authorList>
            <person name="Buell C.R."/>
            <person name="Joardar V."/>
            <person name="Lindeberg M."/>
            <person name="Selengut J."/>
            <person name="Paulsen I.T."/>
            <person name="Gwinn M.L."/>
            <person name="Dodson R.J."/>
            <person name="DeBoy R.T."/>
            <person name="Durkin A.S."/>
            <person name="Kolonay J.F."/>
            <person name="Madupu R."/>
            <person name="Daugherty S.C."/>
            <person name="Brinkac L.M."/>
            <person name="Beanan M.J."/>
            <person name="Haft D.H."/>
            <person name="Nelson W.C."/>
            <person name="Davidsen T.M."/>
            <person name="Zafar N."/>
            <person name="Zhou L."/>
            <person name="Liu J."/>
            <person name="Yuan Q."/>
            <person name="Khouri H.M."/>
            <person name="Fedorova N.B."/>
            <person name="Tran B."/>
            <person name="Russell D."/>
            <person name="Berry K.J."/>
            <person name="Utterback T.R."/>
            <person name="Van Aken S.E."/>
            <person name="Feldblyum T.V."/>
            <person name="D'Ascenzo M."/>
            <person name="Deng W.-L."/>
            <person name="Ramos A.R."/>
            <person name="Alfano J.R."/>
            <person name="Cartinhour S."/>
            <person name="Chatterjee A.K."/>
            <person name="Delaney T.P."/>
            <person name="Lazarowitz S.G."/>
            <person name="Martin G.B."/>
            <person name="Schneider D.J."/>
            <person name="Tang X."/>
            <person name="Bender C.L."/>
            <person name="White O."/>
            <person name="Fraser C.M."/>
            <person name="Collmer A."/>
        </authorList>
    </citation>
    <scope>NUCLEOTIDE SEQUENCE [LARGE SCALE GENOMIC DNA]</scope>
    <source>
        <strain>ATCC BAA-871 / DC3000</strain>
    </source>
</reference>
<comment type="function">
    <text evidence="1">NAD-dependent protein deacetylase which modulates the activities of several proteins which are inactive in their acetylated form.</text>
</comment>
<comment type="catalytic activity">
    <reaction evidence="2">
        <text>N(6)-acetyl-L-lysyl-[protein] + NAD(+) + H2O = 2''-O-acetyl-ADP-D-ribose + nicotinamide + L-lysyl-[protein]</text>
        <dbReference type="Rhea" id="RHEA:43636"/>
        <dbReference type="Rhea" id="RHEA-COMP:9752"/>
        <dbReference type="Rhea" id="RHEA-COMP:10731"/>
        <dbReference type="ChEBI" id="CHEBI:15377"/>
        <dbReference type="ChEBI" id="CHEBI:17154"/>
        <dbReference type="ChEBI" id="CHEBI:29969"/>
        <dbReference type="ChEBI" id="CHEBI:57540"/>
        <dbReference type="ChEBI" id="CHEBI:61930"/>
        <dbReference type="ChEBI" id="CHEBI:83767"/>
        <dbReference type="EC" id="2.3.1.286"/>
    </reaction>
</comment>
<comment type="cofactor">
    <cofactor evidence="1">
        <name>Zn(2+)</name>
        <dbReference type="ChEBI" id="CHEBI:29105"/>
    </cofactor>
    <text evidence="1">Binds 1 zinc ion per subunit.</text>
</comment>
<comment type="subcellular location">
    <subcellularLocation>
        <location evidence="1">Cytoplasm</location>
    </subcellularLocation>
</comment>
<comment type="similarity">
    <text evidence="3">Belongs to the sirtuin family. Class III subfamily.</text>
</comment>
<gene>
    <name type="primary">cobB2</name>
    <name type="ordered locus">PSPTO_1704</name>
</gene>
<keyword id="KW-0963">Cytoplasm</keyword>
<keyword id="KW-0479">Metal-binding</keyword>
<keyword id="KW-0520">NAD</keyword>
<keyword id="KW-1185">Reference proteome</keyword>
<keyword id="KW-0808">Transferase</keyword>
<keyword id="KW-0862">Zinc</keyword>
<proteinExistence type="inferred from homology"/>
<dbReference type="EC" id="2.3.1.286" evidence="2"/>
<dbReference type="EMBL" id="AE016853">
    <property type="protein sequence ID" value="AAO55224.1"/>
    <property type="molecule type" value="Genomic_DNA"/>
</dbReference>
<dbReference type="RefSeq" id="NP_791529.1">
    <property type="nucleotide sequence ID" value="NC_004578.1"/>
</dbReference>
<dbReference type="SMR" id="Q885X7"/>
<dbReference type="STRING" id="223283.PSPTO_1704"/>
<dbReference type="KEGG" id="pst:PSPTO_1704"/>
<dbReference type="PATRIC" id="fig|223283.9.peg.1731"/>
<dbReference type="eggNOG" id="COG0846">
    <property type="taxonomic scope" value="Bacteria"/>
</dbReference>
<dbReference type="HOGENOM" id="CLU_023643_3_0_6"/>
<dbReference type="OrthoDB" id="9800582at2"/>
<dbReference type="PhylomeDB" id="Q885X7"/>
<dbReference type="Proteomes" id="UP000002515">
    <property type="component" value="Chromosome"/>
</dbReference>
<dbReference type="GO" id="GO:0005737">
    <property type="term" value="C:cytoplasm"/>
    <property type="evidence" value="ECO:0007669"/>
    <property type="project" value="UniProtKB-SubCell"/>
</dbReference>
<dbReference type="GO" id="GO:0017136">
    <property type="term" value="F:histone deacetylase activity, NAD-dependent"/>
    <property type="evidence" value="ECO:0007669"/>
    <property type="project" value="TreeGrafter"/>
</dbReference>
<dbReference type="GO" id="GO:0046872">
    <property type="term" value="F:metal ion binding"/>
    <property type="evidence" value="ECO:0007669"/>
    <property type="project" value="UniProtKB-KW"/>
</dbReference>
<dbReference type="GO" id="GO:0070403">
    <property type="term" value="F:NAD+ binding"/>
    <property type="evidence" value="ECO:0007669"/>
    <property type="project" value="InterPro"/>
</dbReference>
<dbReference type="CDD" id="cd01407">
    <property type="entry name" value="SIR2-fam"/>
    <property type="match status" value="1"/>
</dbReference>
<dbReference type="Gene3D" id="3.30.1600.10">
    <property type="entry name" value="SIR2/SIRT2 'Small Domain"/>
    <property type="match status" value="1"/>
</dbReference>
<dbReference type="Gene3D" id="3.40.50.1220">
    <property type="entry name" value="TPP-binding domain"/>
    <property type="match status" value="1"/>
</dbReference>
<dbReference type="InterPro" id="IPR029035">
    <property type="entry name" value="DHS-like_NAD/FAD-binding_dom"/>
</dbReference>
<dbReference type="InterPro" id="IPR050134">
    <property type="entry name" value="NAD-dep_sirtuin_deacylases"/>
</dbReference>
<dbReference type="InterPro" id="IPR003000">
    <property type="entry name" value="Sirtuin"/>
</dbReference>
<dbReference type="InterPro" id="IPR026591">
    <property type="entry name" value="Sirtuin_cat_small_dom_sf"/>
</dbReference>
<dbReference type="InterPro" id="IPR026590">
    <property type="entry name" value="Ssirtuin_cat_dom"/>
</dbReference>
<dbReference type="NCBIfam" id="NF001753">
    <property type="entry name" value="PRK00481.1-3"/>
    <property type="match status" value="1"/>
</dbReference>
<dbReference type="PANTHER" id="PTHR11085:SF4">
    <property type="entry name" value="NAD-DEPENDENT PROTEIN DEACYLASE"/>
    <property type="match status" value="1"/>
</dbReference>
<dbReference type="PANTHER" id="PTHR11085">
    <property type="entry name" value="NAD-DEPENDENT PROTEIN DEACYLASE SIRTUIN-5, MITOCHONDRIAL-RELATED"/>
    <property type="match status" value="1"/>
</dbReference>
<dbReference type="Pfam" id="PF02146">
    <property type="entry name" value="SIR2"/>
    <property type="match status" value="1"/>
</dbReference>
<dbReference type="SUPFAM" id="SSF52467">
    <property type="entry name" value="DHS-like NAD/FAD-binding domain"/>
    <property type="match status" value="1"/>
</dbReference>
<dbReference type="PROSITE" id="PS50305">
    <property type="entry name" value="SIRTUIN"/>
    <property type="match status" value="1"/>
</dbReference>
<sequence>MLQAASALRHAKRILVITGAGLSADSGLPTYRGVGGLYNGETEDGLPIEMALSGPMLRRDPELCWKYIAELGKACLGGEPNVAHYAIAQLQRIKPECWVLTQNVDGYHRAAGSPPERLIEIHGQLSPLFCQSCAAQDPQLSEHLQRPLPPLCRLCGGILRPPVVLFQEMLPERALETLYEQLATGYDAVLSIGTTASFPYIHEPVIRTRVSGGFTAEINPQPTDHSAQMDVFLQCRAAHVMAELISHI</sequence>
<organism>
    <name type="scientific">Pseudomonas syringae pv. tomato (strain ATCC BAA-871 / DC3000)</name>
    <dbReference type="NCBI Taxonomy" id="223283"/>
    <lineage>
        <taxon>Bacteria</taxon>
        <taxon>Pseudomonadati</taxon>
        <taxon>Pseudomonadota</taxon>
        <taxon>Gammaproteobacteria</taxon>
        <taxon>Pseudomonadales</taxon>
        <taxon>Pseudomonadaceae</taxon>
        <taxon>Pseudomonas</taxon>
    </lineage>
</organism>
<name>NPD2_PSESM</name>
<feature type="chain" id="PRO_0000110340" description="NAD-dependent protein deacylase 2">
    <location>
        <begin position="1"/>
        <end position="248"/>
    </location>
</feature>
<feature type="domain" description="Deacetylase sirtuin-type" evidence="2">
    <location>
        <begin position="1"/>
        <end position="248"/>
    </location>
</feature>
<feature type="active site" description="Proton acceptor" evidence="2">
    <location>
        <position position="122"/>
    </location>
</feature>
<feature type="binding site" evidence="1">
    <location>
        <begin position="19"/>
        <end position="38"/>
    </location>
    <ligand>
        <name>NAD(+)</name>
        <dbReference type="ChEBI" id="CHEBI:57540"/>
    </ligand>
</feature>
<feature type="binding site" evidence="1">
    <location>
        <begin position="102"/>
        <end position="105"/>
    </location>
    <ligand>
        <name>NAD(+)</name>
        <dbReference type="ChEBI" id="CHEBI:57540"/>
    </ligand>
</feature>
<feature type="binding site" evidence="2">
    <location>
        <position position="130"/>
    </location>
    <ligand>
        <name>Zn(2+)</name>
        <dbReference type="ChEBI" id="CHEBI:29105"/>
    </ligand>
</feature>
<feature type="binding site" evidence="2">
    <location>
        <position position="133"/>
    </location>
    <ligand>
        <name>Zn(2+)</name>
        <dbReference type="ChEBI" id="CHEBI:29105"/>
    </ligand>
</feature>
<feature type="binding site" evidence="2">
    <location>
        <position position="152"/>
    </location>
    <ligand>
        <name>Zn(2+)</name>
        <dbReference type="ChEBI" id="CHEBI:29105"/>
    </ligand>
</feature>
<feature type="binding site" evidence="2">
    <location>
        <position position="155"/>
    </location>
    <ligand>
        <name>Zn(2+)</name>
        <dbReference type="ChEBI" id="CHEBI:29105"/>
    </ligand>
</feature>
<feature type="binding site" evidence="1">
    <location>
        <begin position="193"/>
        <end position="195"/>
    </location>
    <ligand>
        <name>NAD(+)</name>
        <dbReference type="ChEBI" id="CHEBI:57540"/>
    </ligand>
</feature>
<feature type="binding site" evidence="1">
    <location>
        <begin position="219"/>
        <end position="221"/>
    </location>
    <ligand>
        <name>NAD(+)</name>
        <dbReference type="ChEBI" id="CHEBI:57540"/>
    </ligand>
</feature>
<feature type="binding site" evidence="1">
    <location>
        <position position="237"/>
    </location>
    <ligand>
        <name>NAD(+)</name>
        <dbReference type="ChEBI" id="CHEBI:57540"/>
    </ligand>
</feature>
<evidence type="ECO:0000250" key="1"/>
<evidence type="ECO:0000255" key="2">
    <source>
        <dbReference type="PROSITE-ProRule" id="PRU00236"/>
    </source>
</evidence>
<evidence type="ECO:0000305" key="3"/>
<protein>
    <recommendedName>
        <fullName>NAD-dependent protein deacylase 2</fullName>
        <ecNumber evidence="2">2.3.1.286</ecNumber>
    </recommendedName>
    <alternativeName>
        <fullName>Regulatory protein SIR2 homolog 2</fullName>
    </alternativeName>
</protein>